<reference key="1">
    <citation type="journal article" date="2022" name="J. Infect. Dis.">
        <title>Exportation of Monkeypox virus from the African continent.</title>
        <authorList>
            <person name="Mauldin M.R."/>
            <person name="McCollum A.M."/>
            <person name="Nakazawa Y.J."/>
            <person name="Mandra A."/>
            <person name="Whitehouse E.R."/>
            <person name="Davidson W."/>
            <person name="Zhao H."/>
            <person name="Gao J."/>
            <person name="Li Y."/>
            <person name="Doty J."/>
            <person name="Yinka-Ogunleye A."/>
            <person name="Akinpelu A."/>
            <person name="Aruna O."/>
            <person name="Naidoo D."/>
            <person name="Lewandowski K."/>
            <person name="Afrough B."/>
            <person name="Graham V."/>
            <person name="Aarons E."/>
            <person name="Hewson R."/>
            <person name="Vipond R."/>
            <person name="Dunning J."/>
            <person name="Chand M."/>
            <person name="Brown C."/>
            <person name="Cohen-Gihon I."/>
            <person name="Erez N."/>
            <person name="Shifman O."/>
            <person name="Israeli O."/>
            <person name="Sharon M."/>
            <person name="Schwartz E."/>
            <person name="Beth-Din A."/>
            <person name="Zvi A."/>
            <person name="Mak T.M."/>
            <person name="Ng Y.K."/>
            <person name="Cui L."/>
            <person name="Lin R.T.P."/>
            <person name="Olson V.A."/>
            <person name="Brooks T."/>
            <person name="Paran N."/>
            <person name="Ihekweazu C."/>
            <person name="Reynolds M.G."/>
        </authorList>
    </citation>
    <scope>NUCLEOTIDE SEQUENCE [LARGE SCALE GENOMIC DNA]</scope>
    <source>
        <strain>MPXV-M5312_HM12_Rivers</strain>
    </source>
</reference>
<comment type="function">
    <text evidence="1">Plays a role in mediating viral host range. May act to inhibit a caspase independent form of apoptosis to allow efficient virus replication in infected cells.</text>
</comment>
<comment type="subcellular location">
    <subcellularLocation>
        <location evidence="1">Host cytoplasm</location>
    </subcellularLocation>
</comment>
<comment type="similarity">
    <text evidence="2">Belongs to the serpin family. Poxviruses subfamily.</text>
</comment>
<gene>
    <name type="primary">OPG208</name>
    <name type="synonym">SPI-1</name>
    <name type="ORF">MPXVgp180</name>
</gene>
<name>SPI1_MONPV</name>
<dbReference type="EMBL" id="MT903340">
    <property type="protein sequence ID" value="QNP13047.1"/>
    <property type="molecule type" value="Genomic_DNA"/>
</dbReference>
<dbReference type="RefSeq" id="YP_010377174.1">
    <property type="nucleotide sequence ID" value="NC_063383.1"/>
</dbReference>
<dbReference type="SMR" id="A0A7H0DNG4"/>
<dbReference type="GeneID" id="72551587"/>
<dbReference type="Proteomes" id="UP000516359">
    <property type="component" value="Genome"/>
</dbReference>
<dbReference type="GO" id="GO:0005615">
    <property type="term" value="C:extracellular space"/>
    <property type="evidence" value="ECO:0007669"/>
    <property type="project" value="InterPro"/>
</dbReference>
<dbReference type="GO" id="GO:0030430">
    <property type="term" value="C:host cell cytoplasm"/>
    <property type="evidence" value="ECO:0007669"/>
    <property type="project" value="UniProtKB-SubCell"/>
</dbReference>
<dbReference type="GO" id="GO:0004867">
    <property type="term" value="F:serine-type endopeptidase inhibitor activity"/>
    <property type="evidence" value="ECO:0007669"/>
    <property type="project" value="InterPro"/>
</dbReference>
<dbReference type="CDD" id="cd19583">
    <property type="entry name" value="serpinN_SPI-1_SPI-2"/>
    <property type="match status" value="1"/>
</dbReference>
<dbReference type="Gene3D" id="2.30.39.10">
    <property type="entry name" value="Alpha-1-antitrypsin, domain 1"/>
    <property type="match status" value="1"/>
</dbReference>
<dbReference type="Gene3D" id="3.30.497.10">
    <property type="entry name" value="Antithrombin, subunit I, domain 2"/>
    <property type="match status" value="1"/>
</dbReference>
<dbReference type="InterPro" id="IPR023795">
    <property type="entry name" value="Serpin_CS"/>
</dbReference>
<dbReference type="InterPro" id="IPR023796">
    <property type="entry name" value="Serpin_dom"/>
</dbReference>
<dbReference type="InterPro" id="IPR000215">
    <property type="entry name" value="Serpin_fam"/>
</dbReference>
<dbReference type="InterPro" id="IPR036186">
    <property type="entry name" value="Serpin_sf"/>
</dbReference>
<dbReference type="InterPro" id="IPR042178">
    <property type="entry name" value="Serpin_sf_1"/>
</dbReference>
<dbReference type="InterPro" id="IPR042185">
    <property type="entry name" value="Serpin_sf_2"/>
</dbReference>
<dbReference type="PANTHER" id="PTHR11461:SF211">
    <property type="entry name" value="GH10112P-RELATED"/>
    <property type="match status" value="1"/>
</dbReference>
<dbReference type="PANTHER" id="PTHR11461">
    <property type="entry name" value="SERINE PROTEASE INHIBITOR, SERPIN"/>
    <property type="match status" value="1"/>
</dbReference>
<dbReference type="Pfam" id="PF00079">
    <property type="entry name" value="Serpin"/>
    <property type="match status" value="1"/>
</dbReference>
<dbReference type="SMART" id="SM00093">
    <property type="entry name" value="SERPIN"/>
    <property type="match status" value="1"/>
</dbReference>
<dbReference type="SUPFAM" id="SSF56574">
    <property type="entry name" value="Serpins"/>
    <property type="match status" value="1"/>
</dbReference>
<dbReference type="PROSITE" id="PS00284">
    <property type="entry name" value="SERPIN"/>
    <property type="match status" value="1"/>
</dbReference>
<feature type="chain" id="PRO_0000457615" description="Serine proteinase inhibitor 1">
    <location>
        <begin position="1"/>
        <end position="357"/>
    </location>
</feature>
<keyword id="KW-1035">Host cytoplasm</keyword>
<keyword id="KW-1185">Reference proteome</keyword>
<evidence type="ECO:0000250" key="1">
    <source>
        <dbReference type="UniProtKB" id="P15058"/>
    </source>
</evidence>
<evidence type="ECO:0000305" key="2"/>
<sequence length="357" mass="40959">MDIFKELILKHTDENVLISPVSILSTLSILNHGAAGSTAEQLSKYIENMNENTPDDKKDDNNDMDVDIPYCATLATANKIYGSDSIEFHASFLQKIKDDFQTVNFNNANQTKELINEWVKTMTNGKINSLLTSPLSINTRMIVISAVHFKAMWKYPFSKHLTYTDKFYISKNIVTSVDMMVGTENDLQYVHINELFGGFSIIDIPYEGNSSMVIILPDDIEGIYNIEKNITDEKFKKWCGMLSTKSIDLYMPKFKVEMTEPYNLVPILENLGLTNIFGYYADFSKMCNETITVEKFLHTTFIDVNEEYTEVSAVTGVFMTNFSMVYRMKVYINHPFIYMIKDNTGHTLFIGKYCYPQ</sequence>
<proteinExistence type="inferred from homology"/>
<protein>
    <recommendedName>
        <fullName>Serine proteinase inhibitor 1</fullName>
        <shortName>Serp-1</shortName>
        <shortName>Serpin-1</shortName>
    </recommendedName>
</protein>
<accession>A0A7H0DNG4</accession>
<organism>
    <name type="scientific">Monkeypox virus</name>
    <dbReference type="NCBI Taxonomy" id="10244"/>
    <lineage>
        <taxon>Viruses</taxon>
        <taxon>Varidnaviria</taxon>
        <taxon>Bamfordvirae</taxon>
        <taxon>Nucleocytoviricota</taxon>
        <taxon>Pokkesviricetes</taxon>
        <taxon>Chitovirales</taxon>
        <taxon>Poxviridae</taxon>
        <taxon>Chordopoxvirinae</taxon>
        <taxon>Orthopoxvirus</taxon>
    </lineage>
</organism>
<organismHost>
    <name type="scientific">Cynomys gunnisoni</name>
    <name type="common">Gunnison's prairie dog</name>
    <name type="synonym">Spermophilus gunnisoni</name>
    <dbReference type="NCBI Taxonomy" id="45479"/>
</organismHost>
<organismHost>
    <name type="scientific">Cynomys leucurus</name>
    <name type="common">White-tailed prairie dog</name>
    <dbReference type="NCBI Taxonomy" id="99825"/>
</organismHost>
<organismHost>
    <name type="scientific">Cynomys ludovicianus</name>
    <name type="common">Black-tailed prairie dog</name>
    <dbReference type="NCBI Taxonomy" id="45480"/>
</organismHost>
<organismHost>
    <name type="scientific">Cynomys mexicanus</name>
    <name type="common">Mexican prairie dog</name>
    <dbReference type="NCBI Taxonomy" id="99826"/>
</organismHost>
<organismHost>
    <name type="scientific">Cynomys parvidens</name>
    <name type="common">Utah prairie dog</name>
    <dbReference type="NCBI Taxonomy" id="99827"/>
</organismHost>
<organismHost>
    <name type="scientific">Gliridae</name>
    <name type="common">dormice</name>
    <dbReference type="NCBI Taxonomy" id="30650"/>
</organismHost>
<organismHost>
    <name type="scientific">Heliosciurus ruwenzorii</name>
    <name type="common">Ruwenzori sun squirrel</name>
    <dbReference type="NCBI Taxonomy" id="226685"/>
</organismHost>
<organismHost>
    <name type="scientific">Homo sapiens</name>
    <name type="common">Human</name>
    <dbReference type="NCBI Taxonomy" id="9606"/>
</organismHost>
<organismHost>
    <name type="scientific">Mus musculus</name>
    <name type="common">Mouse</name>
    <dbReference type="NCBI Taxonomy" id="10090"/>
</organismHost>